<feature type="chain" id="PRO_1000090547" description="Crossover junction endodeoxyribonuclease RuvC">
    <location>
        <begin position="1"/>
        <end position="187"/>
    </location>
</feature>
<feature type="active site" evidence="1">
    <location>
        <position position="7"/>
    </location>
</feature>
<feature type="active site" evidence="1">
    <location>
        <position position="67"/>
    </location>
</feature>
<feature type="active site" evidence="1">
    <location>
        <position position="140"/>
    </location>
</feature>
<feature type="binding site" evidence="1">
    <location>
        <position position="7"/>
    </location>
    <ligand>
        <name>Mg(2+)</name>
        <dbReference type="ChEBI" id="CHEBI:18420"/>
        <label>1</label>
    </ligand>
</feature>
<feature type="binding site" evidence="1">
    <location>
        <position position="67"/>
    </location>
    <ligand>
        <name>Mg(2+)</name>
        <dbReference type="ChEBI" id="CHEBI:18420"/>
        <label>2</label>
    </ligand>
</feature>
<feature type="binding site" evidence="1">
    <location>
        <position position="140"/>
    </location>
    <ligand>
        <name>Mg(2+)</name>
        <dbReference type="ChEBI" id="CHEBI:18420"/>
        <label>1</label>
    </ligand>
</feature>
<reference key="1">
    <citation type="submission" date="2008-06" db="EMBL/GenBank/DDBJ databases">
        <title>Complete sequence of chromosome of Prosthecochloris aestuarii DSM 271.</title>
        <authorList>
            <consortium name="US DOE Joint Genome Institute"/>
            <person name="Lucas S."/>
            <person name="Copeland A."/>
            <person name="Lapidus A."/>
            <person name="Glavina del Rio T."/>
            <person name="Dalin E."/>
            <person name="Tice H."/>
            <person name="Bruce D."/>
            <person name="Goodwin L."/>
            <person name="Pitluck S."/>
            <person name="Schmutz J."/>
            <person name="Larimer F."/>
            <person name="Land M."/>
            <person name="Hauser L."/>
            <person name="Kyrpides N."/>
            <person name="Anderson I."/>
            <person name="Liu Z."/>
            <person name="Li T."/>
            <person name="Zhao F."/>
            <person name="Overmann J."/>
            <person name="Bryant D.A."/>
            <person name="Richardson P."/>
        </authorList>
    </citation>
    <scope>NUCLEOTIDE SEQUENCE [LARGE SCALE GENOMIC DNA]</scope>
    <source>
        <strain>DSM 271 / SK 413</strain>
    </source>
</reference>
<proteinExistence type="inferred from homology"/>
<sequence length="187" mass="20274">MIVLGVDPGSVHTGYGVVLCNGQKFSLVACGLIRLSSNQSIADRIKIIYDELGAIIAEYNPQRLALETAYVNRNPQSALKLGQVRGAIVALTMNKGLELHEYAPREVKYVLTGKGSAGKEQVSYMARHFLNIQEPIKPYDVTDALGIALCDLLCDAKGGSPRRGSGSRKSARGGWEDFVRTNPELIV</sequence>
<dbReference type="EC" id="3.1.21.10" evidence="1"/>
<dbReference type="EMBL" id="CP001108">
    <property type="protein sequence ID" value="ACF45553.1"/>
    <property type="molecule type" value="Genomic_DNA"/>
</dbReference>
<dbReference type="RefSeq" id="WP_012505090.1">
    <property type="nucleotide sequence ID" value="NC_011059.1"/>
</dbReference>
<dbReference type="SMR" id="B4S5F6"/>
<dbReference type="STRING" id="290512.Paes_0497"/>
<dbReference type="KEGG" id="paa:Paes_0497"/>
<dbReference type="eggNOG" id="COG0817">
    <property type="taxonomic scope" value="Bacteria"/>
</dbReference>
<dbReference type="HOGENOM" id="CLU_091257_3_1_10"/>
<dbReference type="Proteomes" id="UP000002725">
    <property type="component" value="Chromosome"/>
</dbReference>
<dbReference type="GO" id="GO:0005737">
    <property type="term" value="C:cytoplasm"/>
    <property type="evidence" value="ECO:0007669"/>
    <property type="project" value="UniProtKB-SubCell"/>
</dbReference>
<dbReference type="GO" id="GO:0048476">
    <property type="term" value="C:Holliday junction resolvase complex"/>
    <property type="evidence" value="ECO:0007669"/>
    <property type="project" value="UniProtKB-UniRule"/>
</dbReference>
<dbReference type="GO" id="GO:0008821">
    <property type="term" value="F:crossover junction DNA endonuclease activity"/>
    <property type="evidence" value="ECO:0007669"/>
    <property type="project" value="UniProtKB-UniRule"/>
</dbReference>
<dbReference type="GO" id="GO:0003677">
    <property type="term" value="F:DNA binding"/>
    <property type="evidence" value="ECO:0007669"/>
    <property type="project" value="UniProtKB-KW"/>
</dbReference>
<dbReference type="GO" id="GO:0000287">
    <property type="term" value="F:magnesium ion binding"/>
    <property type="evidence" value="ECO:0007669"/>
    <property type="project" value="UniProtKB-UniRule"/>
</dbReference>
<dbReference type="GO" id="GO:0006310">
    <property type="term" value="P:DNA recombination"/>
    <property type="evidence" value="ECO:0007669"/>
    <property type="project" value="UniProtKB-UniRule"/>
</dbReference>
<dbReference type="GO" id="GO:0006281">
    <property type="term" value="P:DNA repair"/>
    <property type="evidence" value="ECO:0007669"/>
    <property type="project" value="UniProtKB-UniRule"/>
</dbReference>
<dbReference type="CDD" id="cd16962">
    <property type="entry name" value="RuvC"/>
    <property type="match status" value="1"/>
</dbReference>
<dbReference type="FunFam" id="3.30.420.10:FF:000002">
    <property type="entry name" value="Crossover junction endodeoxyribonuclease RuvC"/>
    <property type="match status" value="1"/>
</dbReference>
<dbReference type="Gene3D" id="3.30.420.10">
    <property type="entry name" value="Ribonuclease H-like superfamily/Ribonuclease H"/>
    <property type="match status" value="1"/>
</dbReference>
<dbReference type="HAMAP" id="MF_00034">
    <property type="entry name" value="RuvC"/>
    <property type="match status" value="1"/>
</dbReference>
<dbReference type="InterPro" id="IPR012337">
    <property type="entry name" value="RNaseH-like_sf"/>
</dbReference>
<dbReference type="InterPro" id="IPR036397">
    <property type="entry name" value="RNaseH_sf"/>
</dbReference>
<dbReference type="InterPro" id="IPR020563">
    <property type="entry name" value="X-over_junc_endoDNase_Mg_BS"/>
</dbReference>
<dbReference type="InterPro" id="IPR002176">
    <property type="entry name" value="X-over_junc_endoDNase_RuvC"/>
</dbReference>
<dbReference type="NCBIfam" id="TIGR00228">
    <property type="entry name" value="ruvC"/>
    <property type="match status" value="1"/>
</dbReference>
<dbReference type="PANTHER" id="PTHR30194">
    <property type="entry name" value="CROSSOVER JUNCTION ENDODEOXYRIBONUCLEASE RUVC"/>
    <property type="match status" value="1"/>
</dbReference>
<dbReference type="PANTHER" id="PTHR30194:SF3">
    <property type="entry name" value="CROSSOVER JUNCTION ENDODEOXYRIBONUCLEASE RUVC"/>
    <property type="match status" value="1"/>
</dbReference>
<dbReference type="Pfam" id="PF02075">
    <property type="entry name" value="RuvC"/>
    <property type="match status" value="1"/>
</dbReference>
<dbReference type="PRINTS" id="PR00696">
    <property type="entry name" value="RSOLVASERUVC"/>
</dbReference>
<dbReference type="SUPFAM" id="SSF53098">
    <property type="entry name" value="Ribonuclease H-like"/>
    <property type="match status" value="1"/>
</dbReference>
<dbReference type="PROSITE" id="PS01321">
    <property type="entry name" value="RUVC"/>
    <property type="match status" value="1"/>
</dbReference>
<evidence type="ECO:0000255" key="1">
    <source>
        <dbReference type="HAMAP-Rule" id="MF_00034"/>
    </source>
</evidence>
<keyword id="KW-0963">Cytoplasm</keyword>
<keyword id="KW-0227">DNA damage</keyword>
<keyword id="KW-0233">DNA recombination</keyword>
<keyword id="KW-0234">DNA repair</keyword>
<keyword id="KW-0238">DNA-binding</keyword>
<keyword id="KW-0255">Endonuclease</keyword>
<keyword id="KW-0378">Hydrolase</keyword>
<keyword id="KW-0460">Magnesium</keyword>
<keyword id="KW-0479">Metal-binding</keyword>
<keyword id="KW-0540">Nuclease</keyword>
<name>RUVC_PROA2</name>
<accession>B4S5F6</accession>
<protein>
    <recommendedName>
        <fullName evidence="1">Crossover junction endodeoxyribonuclease RuvC</fullName>
        <ecNumber evidence="1">3.1.21.10</ecNumber>
    </recommendedName>
    <alternativeName>
        <fullName evidence="1">Holliday junction nuclease RuvC</fullName>
    </alternativeName>
    <alternativeName>
        <fullName evidence="1">Holliday junction resolvase RuvC</fullName>
    </alternativeName>
</protein>
<gene>
    <name evidence="1" type="primary">ruvC</name>
    <name type="ordered locus">Paes_0497</name>
</gene>
<organism>
    <name type="scientific">Prosthecochloris aestuarii (strain DSM 271 / SK 413)</name>
    <dbReference type="NCBI Taxonomy" id="290512"/>
    <lineage>
        <taxon>Bacteria</taxon>
        <taxon>Pseudomonadati</taxon>
        <taxon>Chlorobiota</taxon>
        <taxon>Chlorobiia</taxon>
        <taxon>Chlorobiales</taxon>
        <taxon>Chlorobiaceae</taxon>
        <taxon>Prosthecochloris</taxon>
    </lineage>
</organism>
<comment type="function">
    <text evidence="1">The RuvA-RuvB-RuvC complex processes Holliday junction (HJ) DNA during genetic recombination and DNA repair. Endonuclease that resolves HJ intermediates. Cleaves cruciform DNA by making single-stranded nicks across the HJ at symmetrical positions within the homologous arms, yielding a 5'-phosphate and a 3'-hydroxyl group; requires a central core of homology in the junction. The consensus cleavage sequence is 5'-(A/T)TT(C/G)-3'. Cleavage occurs on the 3'-side of the TT dinucleotide at the point of strand exchange. HJ branch migration catalyzed by RuvA-RuvB allows RuvC to scan DNA until it finds its consensus sequence, where it cleaves and resolves the cruciform DNA.</text>
</comment>
<comment type="catalytic activity">
    <reaction evidence="1">
        <text>Endonucleolytic cleavage at a junction such as a reciprocal single-stranded crossover between two homologous DNA duplexes (Holliday junction).</text>
        <dbReference type="EC" id="3.1.21.10"/>
    </reaction>
</comment>
<comment type="cofactor">
    <cofactor evidence="1">
        <name>Mg(2+)</name>
        <dbReference type="ChEBI" id="CHEBI:18420"/>
    </cofactor>
    <text evidence="1">Binds 2 Mg(2+) ion per subunit.</text>
</comment>
<comment type="subunit">
    <text evidence="1">Homodimer which binds Holliday junction (HJ) DNA. The HJ becomes 2-fold symmetrical on binding to RuvC with unstacked arms; it has a different conformation from HJ DNA in complex with RuvA. In the full resolvosome a probable DNA-RuvA(4)-RuvB(12)-RuvC(2) complex forms which resolves the HJ.</text>
</comment>
<comment type="subcellular location">
    <subcellularLocation>
        <location evidence="1">Cytoplasm</location>
    </subcellularLocation>
</comment>
<comment type="similarity">
    <text evidence="1">Belongs to the RuvC family.</text>
</comment>